<keyword id="KW-1185">Reference proteome</keyword>
<keyword id="KW-0687">Ribonucleoprotein</keyword>
<keyword id="KW-0689">Ribosomal protein</keyword>
<keyword id="KW-0694">RNA-binding</keyword>
<keyword id="KW-0699">rRNA-binding</keyword>
<organism>
    <name type="scientific">Bacillus licheniformis (strain ATCC 14580 / DSM 13 / JCM 2505 / CCUG 7422 / NBRC 12200 / NCIMB 9375 / NCTC 10341 / NRRL NRS-1264 / Gibson 46)</name>
    <dbReference type="NCBI Taxonomy" id="279010"/>
    <lineage>
        <taxon>Bacteria</taxon>
        <taxon>Bacillati</taxon>
        <taxon>Bacillota</taxon>
        <taxon>Bacilli</taxon>
        <taxon>Bacillales</taxon>
        <taxon>Bacillaceae</taxon>
        <taxon>Bacillus</taxon>
    </lineage>
</organism>
<evidence type="ECO:0000255" key="1">
    <source>
        <dbReference type="HAMAP-Rule" id="MF_01325"/>
    </source>
</evidence>
<evidence type="ECO:0000256" key="2">
    <source>
        <dbReference type="SAM" id="MobiDB-lite"/>
    </source>
</evidence>
<evidence type="ECO:0000305" key="3"/>
<name>RL3_BACLD</name>
<feature type="chain" id="PRO_0000241313" description="Large ribosomal subunit protein uL3">
    <location>
        <begin position="1"/>
        <end position="209"/>
    </location>
</feature>
<feature type="region of interest" description="Disordered" evidence="2">
    <location>
        <begin position="118"/>
        <end position="152"/>
    </location>
</feature>
<dbReference type="EMBL" id="AE017333">
    <property type="protein sequence ID" value="AAU39107.1"/>
    <property type="molecule type" value="Genomic_DNA"/>
</dbReference>
<dbReference type="EMBL" id="CP000002">
    <property type="protein sequence ID" value="AAU21762.1"/>
    <property type="molecule type" value="Genomic_DNA"/>
</dbReference>
<dbReference type="RefSeq" id="WP_003178324.1">
    <property type="nucleotide sequence ID" value="NC_006322.1"/>
</dbReference>
<dbReference type="SMR" id="Q65PA7"/>
<dbReference type="STRING" id="279010.BL01053"/>
<dbReference type="GeneID" id="92858903"/>
<dbReference type="KEGG" id="bld:BLi00133"/>
<dbReference type="KEGG" id="bli:BL01053"/>
<dbReference type="eggNOG" id="COG0087">
    <property type="taxonomic scope" value="Bacteria"/>
</dbReference>
<dbReference type="HOGENOM" id="CLU_044142_4_0_9"/>
<dbReference type="Proteomes" id="UP000000606">
    <property type="component" value="Chromosome"/>
</dbReference>
<dbReference type="GO" id="GO:0022625">
    <property type="term" value="C:cytosolic large ribosomal subunit"/>
    <property type="evidence" value="ECO:0007669"/>
    <property type="project" value="TreeGrafter"/>
</dbReference>
<dbReference type="GO" id="GO:0019843">
    <property type="term" value="F:rRNA binding"/>
    <property type="evidence" value="ECO:0007669"/>
    <property type="project" value="UniProtKB-UniRule"/>
</dbReference>
<dbReference type="GO" id="GO:0003735">
    <property type="term" value="F:structural constituent of ribosome"/>
    <property type="evidence" value="ECO:0007669"/>
    <property type="project" value="InterPro"/>
</dbReference>
<dbReference type="GO" id="GO:0006412">
    <property type="term" value="P:translation"/>
    <property type="evidence" value="ECO:0007669"/>
    <property type="project" value="UniProtKB-UniRule"/>
</dbReference>
<dbReference type="FunFam" id="2.40.30.10:FF:000004">
    <property type="entry name" value="50S ribosomal protein L3"/>
    <property type="match status" value="1"/>
</dbReference>
<dbReference type="FunFam" id="3.30.160.810:FF:000002">
    <property type="entry name" value="50S ribosomal protein L3"/>
    <property type="match status" value="1"/>
</dbReference>
<dbReference type="Gene3D" id="3.30.160.810">
    <property type="match status" value="1"/>
</dbReference>
<dbReference type="Gene3D" id="2.40.30.10">
    <property type="entry name" value="Translation factors"/>
    <property type="match status" value="1"/>
</dbReference>
<dbReference type="HAMAP" id="MF_01325_B">
    <property type="entry name" value="Ribosomal_uL3_B"/>
    <property type="match status" value="1"/>
</dbReference>
<dbReference type="InterPro" id="IPR000597">
    <property type="entry name" value="Ribosomal_uL3"/>
</dbReference>
<dbReference type="InterPro" id="IPR019927">
    <property type="entry name" value="Ribosomal_uL3_bac/org-type"/>
</dbReference>
<dbReference type="InterPro" id="IPR019926">
    <property type="entry name" value="Ribosomal_uL3_CS"/>
</dbReference>
<dbReference type="InterPro" id="IPR009000">
    <property type="entry name" value="Transl_B-barrel_sf"/>
</dbReference>
<dbReference type="NCBIfam" id="TIGR03625">
    <property type="entry name" value="L3_bact"/>
    <property type="match status" value="1"/>
</dbReference>
<dbReference type="PANTHER" id="PTHR11229">
    <property type="entry name" value="50S RIBOSOMAL PROTEIN L3"/>
    <property type="match status" value="1"/>
</dbReference>
<dbReference type="PANTHER" id="PTHR11229:SF16">
    <property type="entry name" value="LARGE RIBOSOMAL SUBUNIT PROTEIN UL3C"/>
    <property type="match status" value="1"/>
</dbReference>
<dbReference type="Pfam" id="PF00297">
    <property type="entry name" value="Ribosomal_L3"/>
    <property type="match status" value="1"/>
</dbReference>
<dbReference type="SUPFAM" id="SSF50447">
    <property type="entry name" value="Translation proteins"/>
    <property type="match status" value="1"/>
</dbReference>
<dbReference type="PROSITE" id="PS00474">
    <property type="entry name" value="RIBOSOMAL_L3"/>
    <property type="match status" value="1"/>
</dbReference>
<gene>
    <name evidence="1" type="primary">rplC</name>
    <name type="ordered locus">BLi00133</name>
    <name type="ordered locus">BL01053</name>
</gene>
<sequence>MTKGILGRKIGMTQVFAENGDLIPVTVIEAAPNVVLQKKTSENDGYEAIQIGFDDKREKLANKPEKGHVAKAETAPKRFVKELRGVDMDAYEVGQEVKVDIFSNGEIVDVTGTSKGKGFQGAIKRHGQSRGPMSHGSRYHRRPGSMGPVDPNRVFKGKLLPGRMGGEQITVQNLEIVKVDAERNLLLVKGNVPGAKKSLVTVKSAVKSK</sequence>
<reference key="1">
    <citation type="journal article" date="2004" name="J. Mol. Microbiol. Biotechnol.">
        <title>The complete genome sequence of Bacillus licheniformis DSM13, an organism with great industrial potential.</title>
        <authorList>
            <person name="Veith B."/>
            <person name="Herzberg C."/>
            <person name="Steckel S."/>
            <person name="Feesche J."/>
            <person name="Maurer K.H."/>
            <person name="Ehrenreich P."/>
            <person name="Baeumer S."/>
            <person name="Henne A."/>
            <person name="Liesegang H."/>
            <person name="Merkl R."/>
            <person name="Ehrenreich A."/>
            <person name="Gottschalk G."/>
        </authorList>
    </citation>
    <scope>NUCLEOTIDE SEQUENCE [LARGE SCALE GENOMIC DNA]</scope>
    <source>
        <strain>ATCC 14580 / DSM 13 / JCM 2505 / CCUG 7422 / NBRC 12200 / NCIMB 9375 / NCTC 10341 / NRRL NRS-1264 / Gibson 46</strain>
    </source>
</reference>
<reference key="2">
    <citation type="journal article" date="2004" name="Genome Biol.">
        <title>Complete genome sequence of the industrial bacterium Bacillus licheniformis and comparisons with closely related Bacillus species.</title>
        <authorList>
            <person name="Rey M.W."/>
            <person name="Ramaiya P."/>
            <person name="Nelson B.A."/>
            <person name="Brody-Karpin S.D."/>
            <person name="Zaretsky E.J."/>
            <person name="Tang M."/>
            <person name="Lopez de Leon A."/>
            <person name="Xiang H."/>
            <person name="Gusti V."/>
            <person name="Clausen I.G."/>
            <person name="Olsen P.B."/>
            <person name="Rasmussen M.D."/>
            <person name="Andersen J.T."/>
            <person name="Joergensen P.L."/>
            <person name="Larsen T.S."/>
            <person name="Sorokin A."/>
            <person name="Bolotin A."/>
            <person name="Lapidus A."/>
            <person name="Galleron N."/>
            <person name="Ehrlich S.D."/>
            <person name="Berka R.M."/>
        </authorList>
    </citation>
    <scope>NUCLEOTIDE SEQUENCE [LARGE SCALE GENOMIC DNA]</scope>
    <source>
        <strain>ATCC 14580 / DSM 13 / JCM 2505 / CCUG 7422 / NBRC 12200 / NCIMB 9375 / NCTC 10341 / NRRL NRS-1264 / Gibson 46</strain>
    </source>
</reference>
<proteinExistence type="inferred from homology"/>
<accession>Q65PA7</accession>
<accession>Q62ZP6</accession>
<comment type="function">
    <text evidence="1">One of the primary rRNA binding proteins, it binds directly near the 3'-end of the 23S rRNA, where it nucleates assembly of the 50S subunit.</text>
</comment>
<comment type="subunit">
    <text evidence="1">Part of the 50S ribosomal subunit. Forms a cluster with proteins L14 and L19.</text>
</comment>
<comment type="similarity">
    <text evidence="1">Belongs to the universal ribosomal protein uL3 family.</text>
</comment>
<protein>
    <recommendedName>
        <fullName evidence="1">Large ribosomal subunit protein uL3</fullName>
    </recommendedName>
    <alternativeName>
        <fullName evidence="3">50S ribosomal protein L3</fullName>
    </alternativeName>
</protein>